<protein>
    <recommendedName>
        <fullName evidence="7">Inactive chitinase-like protein 2</fullName>
        <shortName evidence="6">HbCLP2</shortName>
    </recommendedName>
    <allergenName evidence="2">Hev b 11</allergenName>
</protein>
<organism>
    <name type="scientific">Hevea brasiliensis</name>
    <name type="common">Para rubber tree</name>
    <name type="synonym">Siphonia brasiliensis</name>
    <dbReference type="NCBI Taxonomy" id="3981"/>
    <lineage>
        <taxon>Eukaryota</taxon>
        <taxon>Viridiplantae</taxon>
        <taxon>Streptophyta</taxon>
        <taxon>Embryophyta</taxon>
        <taxon>Tracheophyta</taxon>
        <taxon>Spermatophyta</taxon>
        <taxon>Magnoliopsida</taxon>
        <taxon>eudicotyledons</taxon>
        <taxon>Gunneridae</taxon>
        <taxon>Pentapetalae</taxon>
        <taxon>rosids</taxon>
        <taxon>fabids</taxon>
        <taxon>Malpighiales</taxon>
        <taxon>Euphorbiaceae</taxon>
        <taxon>Crotonoideae</taxon>
        <taxon>Micrandreae</taxon>
        <taxon>Hevea</taxon>
    </lineage>
</organism>
<dbReference type="EMBL" id="KF648873">
    <property type="protein sequence ID" value="AHF88837.1"/>
    <property type="molecule type" value="Genomic_DNA"/>
</dbReference>
<dbReference type="SMR" id="W0IWL0"/>
<dbReference type="GO" id="GO:0008061">
    <property type="term" value="F:chitin binding"/>
    <property type="evidence" value="ECO:0000314"/>
    <property type="project" value="UniProtKB"/>
</dbReference>
<dbReference type="GO" id="GO:0005975">
    <property type="term" value="P:carbohydrate metabolic process"/>
    <property type="evidence" value="ECO:0007669"/>
    <property type="project" value="InterPro"/>
</dbReference>
<dbReference type="GO" id="GO:0016998">
    <property type="term" value="P:cell wall macromolecule catabolic process"/>
    <property type="evidence" value="ECO:0007669"/>
    <property type="project" value="InterPro"/>
</dbReference>
<dbReference type="GO" id="GO:0006032">
    <property type="term" value="P:chitin catabolic process"/>
    <property type="evidence" value="ECO:0007669"/>
    <property type="project" value="InterPro"/>
</dbReference>
<dbReference type="GO" id="GO:0050832">
    <property type="term" value="P:defense response to fungus"/>
    <property type="evidence" value="ECO:0000314"/>
    <property type="project" value="UniProtKB"/>
</dbReference>
<dbReference type="CDD" id="cd00325">
    <property type="entry name" value="chitinase_GH19"/>
    <property type="match status" value="1"/>
</dbReference>
<dbReference type="CDD" id="cd06921">
    <property type="entry name" value="ChtBD1_GH19_hevein"/>
    <property type="match status" value="1"/>
</dbReference>
<dbReference type="FunFam" id="3.30.60.10:FF:000001">
    <property type="entry name" value="Basic endochitinase"/>
    <property type="match status" value="1"/>
</dbReference>
<dbReference type="FunFam" id="3.30.20.10:FF:000001">
    <property type="entry name" value="Endochitinase (Chitinase)"/>
    <property type="match status" value="1"/>
</dbReference>
<dbReference type="Gene3D" id="1.10.530.10">
    <property type="match status" value="1"/>
</dbReference>
<dbReference type="Gene3D" id="3.30.20.10">
    <property type="entry name" value="Endochitinase, domain 2"/>
    <property type="match status" value="1"/>
</dbReference>
<dbReference type="Gene3D" id="3.30.60.10">
    <property type="entry name" value="Endochitinase-like"/>
    <property type="match status" value="1"/>
</dbReference>
<dbReference type="InterPro" id="IPR001002">
    <property type="entry name" value="Chitin-bd_1"/>
</dbReference>
<dbReference type="InterPro" id="IPR036861">
    <property type="entry name" value="Endochitinase-like_sf"/>
</dbReference>
<dbReference type="InterPro" id="IPR016283">
    <property type="entry name" value="Glyco_hydro_19"/>
</dbReference>
<dbReference type="InterPro" id="IPR000726">
    <property type="entry name" value="Glyco_hydro_19_cat"/>
</dbReference>
<dbReference type="InterPro" id="IPR023346">
    <property type="entry name" value="Lysozyme-like_dom_sf"/>
</dbReference>
<dbReference type="PANTHER" id="PTHR22595:SF79">
    <property type="entry name" value="CHITINASE 12"/>
    <property type="match status" value="1"/>
</dbReference>
<dbReference type="PANTHER" id="PTHR22595">
    <property type="entry name" value="CHITINASE-RELATED"/>
    <property type="match status" value="1"/>
</dbReference>
<dbReference type="Pfam" id="PF00187">
    <property type="entry name" value="Chitin_bind_1"/>
    <property type="match status" value="1"/>
</dbReference>
<dbReference type="Pfam" id="PF00182">
    <property type="entry name" value="Glyco_hydro_19"/>
    <property type="match status" value="1"/>
</dbReference>
<dbReference type="PIRSF" id="PIRSF001060">
    <property type="entry name" value="Endochitinase"/>
    <property type="match status" value="1"/>
</dbReference>
<dbReference type="PRINTS" id="PR00451">
    <property type="entry name" value="CHITINBINDNG"/>
</dbReference>
<dbReference type="SMART" id="SM00270">
    <property type="entry name" value="ChtBD1"/>
    <property type="match status" value="2"/>
</dbReference>
<dbReference type="SUPFAM" id="SSF53955">
    <property type="entry name" value="Lysozyme-like"/>
    <property type="match status" value="1"/>
</dbReference>
<dbReference type="SUPFAM" id="SSF57016">
    <property type="entry name" value="Plant lectins/antimicrobial peptides"/>
    <property type="match status" value="1"/>
</dbReference>
<dbReference type="PROSITE" id="PS50941">
    <property type="entry name" value="CHIT_BIND_I_2"/>
    <property type="match status" value="1"/>
</dbReference>
<dbReference type="PROSITE" id="PS00773">
    <property type="entry name" value="CHITINASE_19_1"/>
    <property type="match status" value="1"/>
</dbReference>
<dbReference type="PROSITE" id="PS00774">
    <property type="entry name" value="CHITINASE_19_2"/>
    <property type="match status" value="1"/>
</dbReference>
<feature type="signal peptide" evidence="3">
    <location>
        <begin position="1"/>
        <end position="19"/>
    </location>
</feature>
<feature type="chain" id="PRO_0000447215" description="Inactive chitinase-like protein 2">
    <location>
        <begin position="20"/>
        <end position="342"/>
    </location>
</feature>
<feature type="domain" description="Chitin-binding type-1" evidence="4">
    <location>
        <begin position="20"/>
        <end position="60"/>
    </location>
</feature>
<feature type="disulfide bond" evidence="1 4">
    <location>
        <begin position="22"/>
        <end position="37"/>
    </location>
</feature>
<feature type="disulfide bond" evidence="1 4">
    <location>
        <begin position="31"/>
        <end position="43"/>
    </location>
</feature>
<feature type="disulfide bond" evidence="1 4">
    <location>
        <begin position="36"/>
        <end position="80"/>
    </location>
</feature>
<feature type="disulfide bond" evidence="1 4">
    <location>
        <begin position="84"/>
        <end position="88"/>
    </location>
</feature>
<feature type="disulfide bond" evidence="2">
    <location>
        <begin position="122"/>
        <end position="184"/>
    </location>
</feature>
<feature type="disulfide bond" evidence="2">
    <location>
        <begin position="196"/>
        <end position="204"/>
    </location>
</feature>
<feature type="disulfide bond" evidence="2">
    <location>
        <begin position="301"/>
        <end position="333"/>
    </location>
</feature>
<proteinExistence type="evidence at transcript level"/>
<reference key="1">
    <citation type="journal article" date="2014" name="FEBS J.">
        <title>Comparative study of two GH19 chitinase-like proteins from Hevea brasiliensis, one exhibiting a novel carbohydrate-binding domain.</title>
        <authorList>
            <person name="Martinez-Caballero S."/>
            <person name="Cano-Sanchez P."/>
            <person name="Mares-Mejia I."/>
            <person name="Diaz-Sanchez A.G."/>
            <person name="Macias-Rubalcava M.L."/>
            <person name="Hermoso J.A."/>
            <person name="Rodriguez-Romero A."/>
        </authorList>
    </citation>
    <scope>NUCLEOTIDE SEQUENCE [MRNA]</scope>
    <source>
        <strain>cv. RRIM 600</strain>
    </source>
</reference>
<name>CHI2_HEVBR</name>
<comment type="function">
    <text evidence="5">Inactive chitinase-like protein that does not exhibit hydrolytic activity toward chitin (PubMed:25104038). Binds strongly to chitin and possesses antifungal activity toward the fungal pathogen Altenaria alternata in plate assays (PubMed:25104038). Probably involved in defense against fungal pathogens through a mechanism that only involves carbohydrate binding (PubMed:25104038).</text>
</comment>
<comment type="allergen">
    <text evidence="2">May cause an allergic reaction in human (By similarity). Binds to IgE from sera of patients allergic to rubber latex (By similarity).</text>
</comment>
<comment type="similarity">
    <text evidence="7">Belongs to the glycosyl hydrolase 19 family. Chitinase class I subfamily.</text>
</comment>
<comment type="caution">
    <text evidence="5">Lacks the conserved Glu active site in position 166, which is replaced by an Ala residue, explaining why it is inactive.</text>
</comment>
<keyword id="KW-0020">Allergen</keyword>
<keyword id="KW-0147">Chitin-binding</keyword>
<keyword id="KW-1015">Disulfide bond</keyword>
<keyword id="KW-0611">Plant defense</keyword>
<keyword id="KW-0732">Signal</keyword>
<sequence length="342" mass="36236">MKEIVRALEGYGPPKDKAAEQCGWQAGGALCPGGLCCSQYGWCANTPEYCGSGCQSQCDGGVGGEGGCVDLGCANTPEYCGSGCQSQCDGGVGGEGGCVDLGSIISRSTFEEMLKHRNNAACPAKGFYTYDAFISAAKAFPAFGTTGDVDTCKREIAAFFGQTSHATTGGWPTAPDGPYAWGYCHKEELNQASSYCSPSPAYPCAPGKKYYGRGPIQLSWNYGQCGQALGLDLLNNPDLVATDRVISFKAAIWFWMTPQFPKPSCHDVITGQWSPTGHDISAGRAPGYGVITNIINGGLECGRGWDARVEDRIGFYKRYCDMFGVGYGSNLDCYNQTPFGLG</sequence>
<gene>
    <name evidence="6" type="primary">CHI-L2</name>
</gene>
<evidence type="ECO:0000250" key="1">
    <source>
        <dbReference type="UniProtKB" id="Q8GUD7"/>
    </source>
</evidence>
<evidence type="ECO:0000250" key="2">
    <source>
        <dbReference type="UniProtKB" id="Q949H3"/>
    </source>
</evidence>
<evidence type="ECO:0000255" key="3"/>
<evidence type="ECO:0000255" key="4">
    <source>
        <dbReference type="PROSITE-ProRule" id="PRU00261"/>
    </source>
</evidence>
<evidence type="ECO:0000269" key="5">
    <source>
    </source>
</evidence>
<evidence type="ECO:0000303" key="6">
    <source>
    </source>
</evidence>
<evidence type="ECO:0000305" key="7"/>
<accession>W0IWL0</accession>